<comment type="function">
    <text evidence="2">Component of the ubiquinol-cytochrome c reductase complex (complex III or cytochrome b-c1 complex) that is part of the mitochondrial respiratory chain. The b-c1 complex mediates electron transfer from ubiquinol to cytochrome c. Contributes to the generation of a proton gradient across the mitochondrial membrane that is then used for ATP synthesis.</text>
</comment>
<comment type="cofactor">
    <cofactor evidence="2">
        <name>heme b</name>
        <dbReference type="ChEBI" id="CHEBI:60344"/>
    </cofactor>
    <text evidence="2">Binds 2 heme b groups non-covalently.</text>
</comment>
<comment type="subunit">
    <text evidence="2">The cytochrome bc1 complex contains 11 subunits: 3 respiratory subunits (MT-CYB, CYC1 and UQCRFS1), 2 core proteins (UQCRC1 and UQCRC2) and 6 low-molecular weight proteins (UQCRH/QCR6, UQCRB/QCR7, UQCRQ/QCR8, UQCR10/QCR9, UQCR11/QCR10 and a cleavage product of UQCRFS1). This cytochrome bc1 complex then forms a dimer.</text>
</comment>
<comment type="subcellular location">
    <subcellularLocation>
        <location evidence="2">Mitochondrion inner membrane</location>
        <topology evidence="2">Multi-pass membrane protein</topology>
    </subcellularLocation>
</comment>
<comment type="miscellaneous">
    <text evidence="1">Heme 1 (or BL or b562) is low-potential and absorbs at about 562 nm, and heme 2 (or BH or b566) is high-potential and absorbs at about 566 nm.</text>
</comment>
<comment type="similarity">
    <text evidence="3 4">Belongs to the cytochrome b family.</text>
</comment>
<comment type="caution">
    <text evidence="2">The full-length protein contains only eight transmembrane helices, not nine as predicted by bioinformatics tools.</text>
</comment>
<dbReference type="EMBL" id="AF159395">
    <property type="protein sequence ID" value="AAD49240.1"/>
    <property type="molecule type" value="Genomic_DNA"/>
</dbReference>
<dbReference type="SMR" id="Q9TEY4"/>
<dbReference type="GO" id="GO:0005743">
    <property type="term" value="C:mitochondrial inner membrane"/>
    <property type="evidence" value="ECO:0007669"/>
    <property type="project" value="UniProtKB-SubCell"/>
</dbReference>
<dbReference type="GO" id="GO:0045275">
    <property type="term" value="C:respiratory chain complex III"/>
    <property type="evidence" value="ECO:0007669"/>
    <property type="project" value="InterPro"/>
</dbReference>
<dbReference type="GO" id="GO:0046872">
    <property type="term" value="F:metal ion binding"/>
    <property type="evidence" value="ECO:0007669"/>
    <property type="project" value="UniProtKB-KW"/>
</dbReference>
<dbReference type="GO" id="GO:0008121">
    <property type="term" value="F:ubiquinol-cytochrome-c reductase activity"/>
    <property type="evidence" value="ECO:0007669"/>
    <property type="project" value="InterPro"/>
</dbReference>
<dbReference type="GO" id="GO:0006122">
    <property type="term" value="P:mitochondrial electron transport, ubiquinol to cytochrome c"/>
    <property type="evidence" value="ECO:0007669"/>
    <property type="project" value="TreeGrafter"/>
</dbReference>
<dbReference type="CDD" id="cd00290">
    <property type="entry name" value="cytochrome_b_C"/>
    <property type="match status" value="1"/>
</dbReference>
<dbReference type="CDD" id="cd00284">
    <property type="entry name" value="Cytochrome_b_N"/>
    <property type="match status" value="1"/>
</dbReference>
<dbReference type="FunFam" id="1.20.810.10:FF:000002">
    <property type="entry name" value="Cytochrome b"/>
    <property type="match status" value="1"/>
</dbReference>
<dbReference type="Gene3D" id="1.20.810.10">
    <property type="entry name" value="Cytochrome Bc1 Complex, Chain C"/>
    <property type="match status" value="1"/>
</dbReference>
<dbReference type="InterPro" id="IPR005798">
    <property type="entry name" value="Cyt_b/b6_C"/>
</dbReference>
<dbReference type="InterPro" id="IPR036150">
    <property type="entry name" value="Cyt_b/b6_C_sf"/>
</dbReference>
<dbReference type="InterPro" id="IPR005797">
    <property type="entry name" value="Cyt_b/b6_N"/>
</dbReference>
<dbReference type="InterPro" id="IPR027387">
    <property type="entry name" value="Cytb/b6-like_sf"/>
</dbReference>
<dbReference type="InterPro" id="IPR030689">
    <property type="entry name" value="Cytochrome_b"/>
</dbReference>
<dbReference type="InterPro" id="IPR048260">
    <property type="entry name" value="Cytochrome_b_C_euk/bac"/>
</dbReference>
<dbReference type="InterPro" id="IPR048259">
    <property type="entry name" value="Cytochrome_b_N_euk/bac"/>
</dbReference>
<dbReference type="InterPro" id="IPR016174">
    <property type="entry name" value="Di-haem_cyt_TM"/>
</dbReference>
<dbReference type="PANTHER" id="PTHR19271">
    <property type="entry name" value="CYTOCHROME B"/>
    <property type="match status" value="1"/>
</dbReference>
<dbReference type="PANTHER" id="PTHR19271:SF16">
    <property type="entry name" value="CYTOCHROME B"/>
    <property type="match status" value="1"/>
</dbReference>
<dbReference type="Pfam" id="PF00032">
    <property type="entry name" value="Cytochrom_B_C"/>
    <property type="match status" value="1"/>
</dbReference>
<dbReference type="Pfam" id="PF00033">
    <property type="entry name" value="Cytochrome_B"/>
    <property type="match status" value="1"/>
</dbReference>
<dbReference type="PIRSF" id="PIRSF038885">
    <property type="entry name" value="COB"/>
    <property type="match status" value="1"/>
</dbReference>
<dbReference type="SUPFAM" id="SSF81648">
    <property type="entry name" value="a domain/subunit of cytochrome bc1 complex (Ubiquinol-cytochrome c reductase)"/>
    <property type="match status" value="1"/>
</dbReference>
<dbReference type="SUPFAM" id="SSF81342">
    <property type="entry name" value="Transmembrane di-heme cytochromes"/>
    <property type="match status" value="1"/>
</dbReference>
<dbReference type="PROSITE" id="PS51003">
    <property type="entry name" value="CYTB_CTER"/>
    <property type="match status" value="1"/>
</dbReference>
<dbReference type="PROSITE" id="PS51002">
    <property type="entry name" value="CYTB_NTER"/>
    <property type="match status" value="1"/>
</dbReference>
<geneLocation type="mitochondrion"/>
<accession>Q9TEY4</accession>
<gene>
    <name type="primary">MT-CYB</name>
    <name type="synonym">COB</name>
    <name type="synonym">CYTB</name>
    <name type="synonym">MTCYB</name>
</gene>
<sequence length="381" mass="43171">MTNIRKTHPLLKIINHSFIDLPAPSNISSWWNFGSLLGICLMIQILTGLFLAMHYTSDTMTAFSSVTHICRDVNYGWLIRYMHANGASMFFICLFLHVGRGMYYGSYTFMETWNIGVILLFAVMSTAFMGYVLPWGQMSFWGATVITNLLSAIPYIGTTLVEWIWGGFSVDKATLTRFFAFHFILPFIITALVIVHLLFLHETGSNNPTGLNSDADKIPFHPYYTIKDILGVLMMVSFLMTLVLSFPDLLGDPDNYMPANPLNIPPHIKPEWYFLFAYAILRSIPNKLGGVLALILSILILALLPFLHTSKQRSLMFRPITQTLYWILVANLLVLTWIGGQPVEHPFIIIGQLASISYFSIILILMPISGIIEDKMLKWNL</sequence>
<protein>
    <recommendedName>
        <fullName>Cytochrome b</fullName>
    </recommendedName>
    <alternativeName>
        <fullName>Complex III subunit 3</fullName>
    </alternativeName>
    <alternativeName>
        <fullName>Complex III subunit III</fullName>
    </alternativeName>
    <alternativeName>
        <fullName>Cytochrome b-c1 complex subunit 3</fullName>
    </alternativeName>
    <alternativeName>
        <fullName>Ubiquinol-cytochrome-c reductase complex cytochrome b subunit</fullName>
    </alternativeName>
</protein>
<reference key="1">
    <citation type="journal article" date="2000" name="Mol. Phylogenet. Evol.">
        <title>Molecular phylogeny of European muroid rodents based on complete cytochrome b sequences.</title>
        <authorList>
            <person name="Martin Y."/>
            <person name="Gerlach G."/>
            <person name="Schlotterer C."/>
            <person name="Meyer A."/>
        </authorList>
    </citation>
    <scope>NUCLEOTIDE SEQUENCE [GENOMIC DNA]</scope>
</reference>
<proteinExistence type="inferred from homology"/>
<organism>
    <name type="scientific">Apodemus sylvaticus</name>
    <name type="common">European woodmouse</name>
    <dbReference type="NCBI Taxonomy" id="10129"/>
    <lineage>
        <taxon>Eukaryota</taxon>
        <taxon>Metazoa</taxon>
        <taxon>Chordata</taxon>
        <taxon>Craniata</taxon>
        <taxon>Vertebrata</taxon>
        <taxon>Euteleostomi</taxon>
        <taxon>Mammalia</taxon>
        <taxon>Eutheria</taxon>
        <taxon>Euarchontoglires</taxon>
        <taxon>Glires</taxon>
        <taxon>Rodentia</taxon>
        <taxon>Myomorpha</taxon>
        <taxon>Muroidea</taxon>
        <taxon>Muridae</taxon>
        <taxon>Murinae</taxon>
        <taxon>Apodemus</taxon>
        <taxon>Sylvaemus group</taxon>
    </lineage>
</organism>
<feature type="chain" id="PRO_0000060610" description="Cytochrome b">
    <location>
        <begin position="1"/>
        <end position="381"/>
    </location>
</feature>
<feature type="transmembrane region" description="Helical" evidence="2">
    <location>
        <begin position="33"/>
        <end position="53"/>
    </location>
</feature>
<feature type="transmembrane region" description="Helical" evidence="2">
    <location>
        <begin position="77"/>
        <end position="98"/>
    </location>
</feature>
<feature type="transmembrane region" description="Helical" evidence="2">
    <location>
        <begin position="113"/>
        <end position="133"/>
    </location>
</feature>
<feature type="transmembrane region" description="Helical" evidence="2">
    <location>
        <begin position="178"/>
        <end position="198"/>
    </location>
</feature>
<feature type="transmembrane region" description="Helical" evidence="2">
    <location>
        <begin position="226"/>
        <end position="246"/>
    </location>
</feature>
<feature type="transmembrane region" description="Helical" evidence="2">
    <location>
        <begin position="288"/>
        <end position="308"/>
    </location>
</feature>
<feature type="transmembrane region" description="Helical" evidence="2">
    <location>
        <begin position="320"/>
        <end position="340"/>
    </location>
</feature>
<feature type="transmembrane region" description="Helical" evidence="2">
    <location>
        <begin position="347"/>
        <end position="367"/>
    </location>
</feature>
<feature type="binding site" description="axial binding residue" evidence="2">
    <location>
        <position position="83"/>
    </location>
    <ligand>
        <name>heme b</name>
        <dbReference type="ChEBI" id="CHEBI:60344"/>
        <label>b562</label>
    </ligand>
    <ligandPart>
        <name>Fe</name>
        <dbReference type="ChEBI" id="CHEBI:18248"/>
    </ligandPart>
</feature>
<feature type="binding site" description="axial binding residue" evidence="2">
    <location>
        <position position="97"/>
    </location>
    <ligand>
        <name>heme b</name>
        <dbReference type="ChEBI" id="CHEBI:60344"/>
        <label>b566</label>
    </ligand>
    <ligandPart>
        <name>Fe</name>
        <dbReference type="ChEBI" id="CHEBI:18248"/>
    </ligandPart>
</feature>
<feature type="binding site" description="axial binding residue" evidence="2">
    <location>
        <position position="182"/>
    </location>
    <ligand>
        <name>heme b</name>
        <dbReference type="ChEBI" id="CHEBI:60344"/>
        <label>b562</label>
    </ligand>
    <ligandPart>
        <name>Fe</name>
        <dbReference type="ChEBI" id="CHEBI:18248"/>
    </ligandPart>
</feature>
<feature type="binding site" description="axial binding residue" evidence="2">
    <location>
        <position position="196"/>
    </location>
    <ligand>
        <name>heme b</name>
        <dbReference type="ChEBI" id="CHEBI:60344"/>
        <label>b566</label>
    </ligand>
    <ligandPart>
        <name>Fe</name>
        <dbReference type="ChEBI" id="CHEBI:18248"/>
    </ligandPart>
</feature>
<feature type="binding site" evidence="2">
    <location>
        <position position="201"/>
    </location>
    <ligand>
        <name>a ubiquinone</name>
        <dbReference type="ChEBI" id="CHEBI:16389"/>
    </ligand>
</feature>
<keyword id="KW-0249">Electron transport</keyword>
<keyword id="KW-0349">Heme</keyword>
<keyword id="KW-0408">Iron</keyword>
<keyword id="KW-0472">Membrane</keyword>
<keyword id="KW-0479">Metal-binding</keyword>
<keyword id="KW-0496">Mitochondrion</keyword>
<keyword id="KW-0999">Mitochondrion inner membrane</keyword>
<keyword id="KW-0679">Respiratory chain</keyword>
<keyword id="KW-0812">Transmembrane</keyword>
<keyword id="KW-1133">Transmembrane helix</keyword>
<keyword id="KW-0813">Transport</keyword>
<keyword id="KW-0830">Ubiquinone</keyword>
<evidence type="ECO:0000250" key="1"/>
<evidence type="ECO:0000250" key="2">
    <source>
        <dbReference type="UniProtKB" id="P00157"/>
    </source>
</evidence>
<evidence type="ECO:0000255" key="3">
    <source>
        <dbReference type="PROSITE-ProRule" id="PRU00967"/>
    </source>
</evidence>
<evidence type="ECO:0000255" key="4">
    <source>
        <dbReference type="PROSITE-ProRule" id="PRU00968"/>
    </source>
</evidence>
<name>CYB_APOSY</name>